<evidence type="ECO:0000255" key="1">
    <source>
        <dbReference type="HAMAP-Rule" id="MF_01558"/>
    </source>
</evidence>
<evidence type="ECO:0000255" key="2">
    <source>
        <dbReference type="PROSITE-ProRule" id="PRU01083"/>
    </source>
</evidence>
<name>CDD_VIBA3</name>
<proteinExistence type="inferred from homology"/>
<accession>B7VPF1</accession>
<comment type="function">
    <text evidence="1">This enzyme scavenges exogenous and endogenous cytidine and 2'-deoxycytidine for UMP synthesis.</text>
</comment>
<comment type="catalytic activity">
    <reaction evidence="1">
        <text>cytidine + H2O + H(+) = uridine + NH4(+)</text>
        <dbReference type="Rhea" id="RHEA:16069"/>
        <dbReference type="ChEBI" id="CHEBI:15377"/>
        <dbReference type="ChEBI" id="CHEBI:15378"/>
        <dbReference type="ChEBI" id="CHEBI:16704"/>
        <dbReference type="ChEBI" id="CHEBI:17562"/>
        <dbReference type="ChEBI" id="CHEBI:28938"/>
        <dbReference type="EC" id="3.5.4.5"/>
    </reaction>
</comment>
<comment type="catalytic activity">
    <reaction evidence="1">
        <text>2'-deoxycytidine + H2O + H(+) = 2'-deoxyuridine + NH4(+)</text>
        <dbReference type="Rhea" id="RHEA:13433"/>
        <dbReference type="ChEBI" id="CHEBI:15377"/>
        <dbReference type="ChEBI" id="CHEBI:15378"/>
        <dbReference type="ChEBI" id="CHEBI:15698"/>
        <dbReference type="ChEBI" id="CHEBI:16450"/>
        <dbReference type="ChEBI" id="CHEBI:28938"/>
        <dbReference type="EC" id="3.5.4.5"/>
    </reaction>
</comment>
<comment type="cofactor">
    <cofactor evidence="1">
        <name>Zn(2+)</name>
        <dbReference type="ChEBI" id="CHEBI:29105"/>
    </cofactor>
    <text evidence="1">Binds 1 zinc ion.</text>
</comment>
<comment type="subunit">
    <text evidence="1">Homodimer.</text>
</comment>
<comment type="similarity">
    <text evidence="1">Belongs to the cytidine and deoxycytidylate deaminase family.</text>
</comment>
<sequence>MNSRITLALESAPTAIKALLSDIVLADNFDATLSPEQFASLLQASGLADDELRIALLPFAAAYSYAPLSDFYVGAIVRGLSGTLYFGANLEIAGAQLGQTVHAEQSAISHAWMKGEQGISDITINFSPCGHCRQFMNELTTAKELKVQLPQRDEMSLQEYLPDSFGPADLGVTTGLMTKLDHKHTTEETTPIVVEALAALNRSHAPYTKNLSGVSLQLTSGEVFTGAYAENAAFNPSLPPLQVALIQLKLAGFDFEQIENAALVEIAEGSISHLADTQSTLEAINPDIPVTYLAI</sequence>
<feature type="chain" id="PRO_1000185420" description="Cytidine deaminase">
    <location>
        <begin position="1"/>
        <end position="295"/>
    </location>
</feature>
<feature type="domain" description="CMP/dCMP-type deaminase 1" evidence="2">
    <location>
        <begin position="48"/>
        <end position="168"/>
    </location>
</feature>
<feature type="domain" description="CMP/dCMP-type deaminase 2" evidence="2">
    <location>
        <begin position="187"/>
        <end position="295"/>
    </location>
</feature>
<feature type="active site" description="Proton donor" evidence="1">
    <location>
        <position position="104"/>
    </location>
</feature>
<feature type="binding site" evidence="1">
    <location>
        <begin position="89"/>
        <end position="91"/>
    </location>
    <ligand>
        <name>substrate</name>
    </ligand>
</feature>
<feature type="binding site" evidence="1">
    <location>
        <position position="102"/>
    </location>
    <ligand>
        <name>Zn(2+)</name>
        <dbReference type="ChEBI" id="CHEBI:29105"/>
        <note>catalytic</note>
    </ligand>
</feature>
<feature type="binding site" evidence="1">
    <location>
        <position position="129"/>
    </location>
    <ligand>
        <name>Zn(2+)</name>
        <dbReference type="ChEBI" id="CHEBI:29105"/>
        <note>catalytic</note>
    </ligand>
</feature>
<feature type="binding site" evidence="1">
    <location>
        <position position="132"/>
    </location>
    <ligand>
        <name>Zn(2+)</name>
        <dbReference type="ChEBI" id="CHEBI:29105"/>
        <note>catalytic</note>
    </ligand>
</feature>
<gene>
    <name evidence="1" type="primary">cdd</name>
    <name type="ordered locus">VS_1716</name>
</gene>
<reference key="1">
    <citation type="submission" date="2009-02" db="EMBL/GenBank/DDBJ databases">
        <title>Vibrio splendidus str. LGP32 complete genome.</title>
        <authorList>
            <person name="Mazel D."/>
            <person name="Le Roux F."/>
        </authorList>
    </citation>
    <scope>NUCLEOTIDE SEQUENCE [LARGE SCALE GENOMIC DNA]</scope>
    <source>
        <strain>LGP32</strain>
    </source>
</reference>
<protein>
    <recommendedName>
        <fullName evidence="1">Cytidine deaminase</fullName>
        <ecNumber evidence="1">3.5.4.5</ecNumber>
    </recommendedName>
    <alternativeName>
        <fullName evidence="1">Cytidine aminohydrolase</fullName>
        <shortName evidence="1">CDA</shortName>
    </alternativeName>
</protein>
<dbReference type="EC" id="3.5.4.5" evidence="1"/>
<dbReference type="EMBL" id="FM954972">
    <property type="protein sequence ID" value="CAV18900.1"/>
    <property type="molecule type" value="Genomic_DNA"/>
</dbReference>
<dbReference type="SMR" id="B7VPF1"/>
<dbReference type="STRING" id="575788.VS_1716"/>
<dbReference type="KEGG" id="vsp:VS_1716"/>
<dbReference type="PATRIC" id="fig|575788.5.peg.3010"/>
<dbReference type="eggNOG" id="COG0295">
    <property type="taxonomic scope" value="Bacteria"/>
</dbReference>
<dbReference type="HOGENOM" id="CLU_052424_0_0_6"/>
<dbReference type="Proteomes" id="UP000009100">
    <property type="component" value="Chromosome 1"/>
</dbReference>
<dbReference type="GO" id="GO:0005829">
    <property type="term" value="C:cytosol"/>
    <property type="evidence" value="ECO:0007669"/>
    <property type="project" value="TreeGrafter"/>
</dbReference>
<dbReference type="GO" id="GO:0004126">
    <property type="term" value="F:cytidine deaminase activity"/>
    <property type="evidence" value="ECO:0007669"/>
    <property type="project" value="UniProtKB-UniRule"/>
</dbReference>
<dbReference type="GO" id="GO:0042802">
    <property type="term" value="F:identical protein binding"/>
    <property type="evidence" value="ECO:0007669"/>
    <property type="project" value="UniProtKB-ARBA"/>
</dbReference>
<dbReference type="GO" id="GO:0008270">
    <property type="term" value="F:zinc ion binding"/>
    <property type="evidence" value="ECO:0007669"/>
    <property type="project" value="UniProtKB-UniRule"/>
</dbReference>
<dbReference type="GO" id="GO:0009972">
    <property type="term" value="P:cytidine deamination"/>
    <property type="evidence" value="ECO:0007669"/>
    <property type="project" value="InterPro"/>
</dbReference>
<dbReference type="CDD" id="cd01283">
    <property type="entry name" value="cytidine_deaminase"/>
    <property type="match status" value="2"/>
</dbReference>
<dbReference type="FunFam" id="3.40.140.10:FF:000007">
    <property type="entry name" value="Cytidine deaminase"/>
    <property type="match status" value="1"/>
</dbReference>
<dbReference type="Gene3D" id="3.40.140.10">
    <property type="entry name" value="Cytidine Deaminase, domain 2"/>
    <property type="match status" value="2"/>
</dbReference>
<dbReference type="HAMAP" id="MF_01558">
    <property type="entry name" value="Cyt_deam"/>
    <property type="match status" value="1"/>
</dbReference>
<dbReference type="InterPro" id="IPR016192">
    <property type="entry name" value="APOBEC/CMP_deaminase_Zn-bd"/>
</dbReference>
<dbReference type="InterPro" id="IPR002125">
    <property type="entry name" value="CMP_dCMP_dom"/>
</dbReference>
<dbReference type="InterPro" id="IPR013171">
    <property type="entry name" value="Cyd/dCyd_deaminase_Zn-bd"/>
</dbReference>
<dbReference type="InterPro" id="IPR050202">
    <property type="entry name" value="Cyt/Deoxycyt_deaminase"/>
</dbReference>
<dbReference type="InterPro" id="IPR006263">
    <property type="entry name" value="Cyt_deam_dimer"/>
</dbReference>
<dbReference type="InterPro" id="IPR016193">
    <property type="entry name" value="Cytidine_deaminase-like"/>
</dbReference>
<dbReference type="InterPro" id="IPR020797">
    <property type="entry name" value="Cytidine_deaminase_bacteria"/>
</dbReference>
<dbReference type="NCBIfam" id="TIGR01355">
    <property type="entry name" value="cyt_deam_dimer"/>
    <property type="match status" value="1"/>
</dbReference>
<dbReference type="NCBIfam" id="NF006537">
    <property type="entry name" value="PRK09027.1"/>
    <property type="match status" value="1"/>
</dbReference>
<dbReference type="PANTHER" id="PTHR11644">
    <property type="entry name" value="CYTIDINE DEAMINASE"/>
    <property type="match status" value="1"/>
</dbReference>
<dbReference type="PANTHER" id="PTHR11644:SF2">
    <property type="entry name" value="CYTIDINE DEAMINASE"/>
    <property type="match status" value="1"/>
</dbReference>
<dbReference type="Pfam" id="PF00383">
    <property type="entry name" value="dCMP_cyt_deam_1"/>
    <property type="match status" value="1"/>
</dbReference>
<dbReference type="Pfam" id="PF08211">
    <property type="entry name" value="dCMP_cyt_deam_2"/>
    <property type="match status" value="1"/>
</dbReference>
<dbReference type="PIRSF" id="PIRSF006334">
    <property type="entry name" value="Cdd_plus_pseudo"/>
    <property type="match status" value="1"/>
</dbReference>
<dbReference type="SUPFAM" id="SSF53927">
    <property type="entry name" value="Cytidine deaminase-like"/>
    <property type="match status" value="2"/>
</dbReference>
<dbReference type="PROSITE" id="PS00903">
    <property type="entry name" value="CYT_DCMP_DEAMINASES_1"/>
    <property type="match status" value="1"/>
</dbReference>
<dbReference type="PROSITE" id="PS51747">
    <property type="entry name" value="CYT_DCMP_DEAMINASES_2"/>
    <property type="match status" value="2"/>
</dbReference>
<organism>
    <name type="scientific">Vibrio atlanticus (strain LGP32)</name>
    <name type="common">Vibrio splendidus (strain Mel32)</name>
    <dbReference type="NCBI Taxonomy" id="575788"/>
    <lineage>
        <taxon>Bacteria</taxon>
        <taxon>Pseudomonadati</taxon>
        <taxon>Pseudomonadota</taxon>
        <taxon>Gammaproteobacteria</taxon>
        <taxon>Vibrionales</taxon>
        <taxon>Vibrionaceae</taxon>
        <taxon>Vibrio</taxon>
    </lineage>
</organism>
<keyword id="KW-0378">Hydrolase</keyword>
<keyword id="KW-0479">Metal-binding</keyword>
<keyword id="KW-0862">Zinc</keyword>